<evidence type="ECO:0000255" key="1">
    <source>
        <dbReference type="HAMAP-Rule" id="MF_00418"/>
    </source>
</evidence>
<evidence type="ECO:0000305" key="2"/>
<protein>
    <recommendedName>
        <fullName evidence="1">4-hydroxy-tetrahydrodipicolinate synthase</fullName>
        <shortName evidence="1">HTPA synthase</shortName>
        <ecNumber evidence="1">4.3.3.7</ecNumber>
    </recommendedName>
</protein>
<name>DAPA_LEPBL</name>
<proteinExistence type="inferred from homology"/>
<reference key="1">
    <citation type="journal article" date="2006" name="Proc. Natl. Acad. Sci. U.S.A.">
        <title>Genome reduction in Leptospira borgpetersenii reflects limited transmission potential.</title>
        <authorList>
            <person name="Bulach D.M."/>
            <person name="Zuerner R.L."/>
            <person name="Wilson P."/>
            <person name="Seemann T."/>
            <person name="McGrath A."/>
            <person name="Cullen P.A."/>
            <person name="Davis J."/>
            <person name="Johnson M."/>
            <person name="Kuczek E."/>
            <person name="Alt D.P."/>
            <person name="Peterson-Burch B."/>
            <person name="Coppel R.L."/>
            <person name="Rood J.I."/>
            <person name="Davies J.K."/>
            <person name="Adler B."/>
        </authorList>
    </citation>
    <scope>NUCLEOTIDE SEQUENCE [LARGE SCALE GENOMIC DNA]</scope>
    <source>
        <strain>L550</strain>
    </source>
</reference>
<gene>
    <name evidence="1" type="primary">dapA</name>
    <name type="ordered locus">LBL_0911</name>
</gene>
<feature type="chain" id="PRO_1000050208" description="4-hydroxy-tetrahydrodipicolinate synthase">
    <location>
        <begin position="1"/>
        <end position="294"/>
    </location>
</feature>
<feature type="active site" description="Proton donor/acceptor" evidence="1">
    <location>
        <position position="132"/>
    </location>
</feature>
<feature type="active site" description="Schiff-base intermediate with substrate" evidence="1">
    <location>
        <position position="160"/>
    </location>
</feature>
<feature type="binding site" evidence="1">
    <location>
        <position position="44"/>
    </location>
    <ligand>
        <name>pyruvate</name>
        <dbReference type="ChEBI" id="CHEBI:15361"/>
    </ligand>
</feature>
<feature type="binding site" evidence="1">
    <location>
        <position position="202"/>
    </location>
    <ligand>
        <name>pyruvate</name>
        <dbReference type="ChEBI" id="CHEBI:15361"/>
    </ligand>
</feature>
<feature type="site" description="Part of a proton relay during catalysis" evidence="1">
    <location>
        <position position="43"/>
    </location>
</feature>
<feature type="site" description="Part of a proton relay during catalysis" evidence="1">
    <location>
        <position position="106"/>
    </location>
</feature>
<organism>
    <name type="scientific">Leptospira borgpetersenii serovar Hardjo-bovis (strain L550)</name>
    <dbReference type="NCBI Taxonomy" id="355276"/>
    <lineage>
        <taxon>Bacteria</taxon>
        <taxon>Pseudomonadati</taxon>
        <taxon>Spirochaetota</taxon>
        <taxon>Spirochaetia</taxon>
        <taxon>Leptospirales</taxon>
        <taxon>Leptospiraceae</taxon>
        <taxon>Leptospira</taxon>
    </lineage>
</organism>
<dbReference type="EC" id="4.3.3.7" evidence="1"/>
<dbReference type="EMBL" id="CP000348">
    <property type="protein sequence ID" value="ABJ78452.1"/>
    <property type="molecule type" value="Genomic_DNA"/>
</dbReference>
<dbReference type="SMR" id="Q053P3"/>
<dbReference type="KEGG" id="lbl:LBL_0911"/>
<dbReference type="HOGENOM" id="CLU_049343_7_1_12"/>
<dbReference type="UniPathway" id="UPA00034">
    <property type="reaction ID" value="UER00017"/>
</dbReference>
<dbReference type="GO" id="GO:0005829">
    <property type="term" value="C:cytosol"/>
    <property type="evidence" value="ECO:0007669"/>
    <property type="project" value="TreeGrafter"/>
</dbReference>
<dbReference type="GO" id="GO:0008840">
    <property type="term" value="F:4-hydroxy-tetrahydrodipicolinate synthase activity"/>
    <property type="evidence" value="ECO:0007669"/>
    <property type="project" value="UniProtKB-UniRule"/>
</dbReference>
<dbReference type="GO" id="GO:0019877">
    <property type="term" value="P:diaminopimelate biosynthetic process"/>
    <property type="evidence" value="ECO:0007669"/>
    <property type="project" value="UniProtKB-UniRule"/>
</dbReference>
<dbReference type="GO" id="GO:0009089">
    <property type="term" value="P:lysine biosynthetic process via diaminopimelate"/>
    <property type="evidence" value="ECO:0007669"/>
    <property type="project" value="UniProtKB-UniRule"/>
</dbReference>
<dbReference type="CDD" id="cd00950">
    <property type="entry name" value="DHDPS"/>
    <property type="match status" value="1"/>
</dbReference>
<dbReference type="Gene3D" id="3.20.20.70">
    <property type="entry name" value="Aldolase class I"/>
    <property type="match status" value="1"/>
</dbReference>
<dbReference type="HAMAP" id="MF_00418">
    <property type="entry name" value="DapA"/>
    <property type="match status" value="1"/>
</dbReference>
<dbReference type="InterPro" id="IPR013785">
    <property type="entry name" value="Aldolase_TIM"/>
</dbReference>
<dbReference type="InterPro" id="IPR005263">
    <property type="entry name" value="DapA"/>
</dbReference>
<dbReference type="InterPro" id="IPR002220">
    <property type="entry name" value="DapA-like"/>
</dbReference>
<dbReference type="InterPro" id="IPR020625">
    <property type="entry name" value="Schiff_base-form_aldolases_AS"/>
</dbReference>
<dbReference type="InterPro" id="IPR020624">
    <property type="entry name" value="Schiff_base-form_aldolases_CS"/>
</dbReference>
<dbReference type="NCBIfam" id="TIGR00674">
    <property type="entry name" value="dapA"/>
    <property type="match status" value="1"/>
</dbReference>
<dbReference type="PANTHER" id="PTHR12128:SF66">
    <property type="entry name" value="4-HYDROXY-2-OXOGLUTARATE ALDOLASE, MITOCHONDRIAL"/>
    <property type="match status" value="1"/>
</dbReference>
<dbReference type="PANTHER" id="PTHR12128">
    <property type="entry name" value="DIHYDRODIPICOLINATE SYNTHASE"/>
    <property type="match status" value="1"/>
</dbReference>
<dbReference type="Pfam" id="PF00701">
    <property type="entry name" value="DHDPS"/>
    <property type="match status" value="1"/>
</dbReference>
<dbReference type="PIRSF" id="PIRSF001365">
    <property type="entry name" value="DHDPS"/>
    <property type="match status" value="1"/>
</dbReference>
<dbReference type="PRINTS" id="PR00146">
    <property type="entry name" value="DHPICSNTHASE"/>
</dbReference>
<dbReference type="SMART" id="SM01130">
    <property type="entry name" value="DHDPS"/>
    <property type="match status" value="1"/>
</dbReference>
<dbReference type="SUPFAM" id="SSF51569">
    <property type="entry name" value="Aldolase"/>
    <property type="match status" value="1"/>
</dbReference>
<dbReference type="PROSITE" id="PS00665">
    <property type="entry name" value="DHDPS_1"/>
    <property type="match status" value="1"/>
</dbReference>
<dbReference type="PROSITE" id="PS00666">
    <property type="entry name" value="DHDPS_2"/>
    <property type="match status" value="1"/>
</dbReference>
<keyword id="KW-0028">Amino-acid biosynthesis</keyword>
<keyword id="KW-0963">Cytoplasm</keyword>
<keyword id="KW-0220">Diaminopimelate biosynthesis</keyword>
<keyword id="KW-0456">Lyase</keyword>
<keyword id="KW-0457">Lysine biosynthesis</keyword>
<keyword id="KW-0704">Schiff base</keyword>
<sequence>MFQGVYTAIITPFKNDKIDYDSYNKLLEKQIKAGVNGVVPCGTTGESPTLSHTEHAELIRETVKAVQGKIQVVAGTGSNSTREAIELTEAACKDSVDGILSVNPYYNKPTQEGLFQHFQAVAEHSSVPVMLYNIPGRTSINLQPETVFRLSEIKRIRSMKEATGDLGQMGKLISLVGNKMTVLSGDDNLTLPLLAIGGVGVVSVVSNLFPKAMVEMVKYFQDGRVIEARKIHYDFIEAFALAFMETNPIPIKAAMSWFGHCEPEIRLPLTRLSQNETSVKFKKALEVLKEKGYE</sequence>
<accession>Q053P3</accession>
<comment type="function">
    <text evidence="1">Catalyzes the condensation of (S)-aspartate-beta-semialdehyde [(S)-ASA] and pyruvate to 4-hydroxy-tetrahydrodipicolinate (HTPA).</text>
</comment>
<comment type="catalytic activity">
    <reaction evidence="1">
        <text>L-aspartate 4-semialdehyde + pyruvate = (2S,4S)-4-hydroxy-2,3,4,5-tetrahydrodipicolinate + H2O + H(+)</text>
        <dbReference type="Rhea" id="RHEA:34171"/>
        <dbReference type="ChEBI" id="CHEBI:15361"/>
        <dbReference type="ChEBI" id="CHEBI:15377"/>
        <dbReference type="ChEBI" id="CHEBI:15378"/>
        <dbReference type="ChEBI" id="CHEBI:67139"/>
        <dbReference type="ChEBI" id="CHEBI:537519"/>
        <dbReference type="EC" id="4.3.3.7"/>
    </reaction>
</comment>
<comment type="pathway">
    <text evidence="1">Amino-acid biosynthesis; L-lysine biosynthesis via DAP pathway; (S)-tetrahydrodipicolinate from L-aspartate: step 3/4.</text>
</comment>
<comment type="subunit">
    <text evidence="1">Homotetramer; dimer of dimers.</text>
</comment>
<comment type="subcellular location">
    <subcellularLocation>
        <location evidence="1">Cytoplasm</location>
    </subcellularLocation>
</comment>
<comment type="similarity">
    <text evidence="1">Belongs to the DapA family.</text>
</comment>
<comment type="caution">
    <text evidence="2">Was originally thought to be a dihydrodipicolinate synthase (DHDPS), catalyzing the condensation of (S)-aspartate-beta-semialdehyde [(S)-ASA] and pyruvate to dihydrodipicolinate (DHDP). However, it was shown in E.coli that the product of the enzymatic reaction is not dihydrodipicolinate but in fact (4S)-4-hydroxy-2,3,4,5-tetrahydro-(2S)-dipicolinic acid (HTPA), and that the consecutive dehydration reaction leading to DHDP is not spontaneous but catalyzed by DapB.</text>
</comment>